<proteinExistence type="inferred from homology"/>
<organism>
    <name type="scientific">Salmonella heidelberg (strain SL476)</name>
    <dbReference type="NCBI Taxonomy" id="454169"/>
    <lineage>
        <taxon>Bacteria</taxon>
        <taxon>Pseudomonadati</taxon>
        <taxon>Pseudomonadota</taxon>
        <taxon>Gammaproteobacteria</taxon>
        <taxon>Enterobacterales</taxon>
        <taxon>Enterobacteriaceae</taxon>
        <taxon>Salmonella</taxon>
    </lineage>
</organism>
<comment type="function">
    <text evidence="1">Phosphatase that hydrolyzes non-canonical purine nucleotides such as XTP and ITP to their respective diphosphate derivatives. Probably excludes non-canonical purines from DNA/RNA precursor pool, thus preventing their incorporation into DNA/RNA and avoiding chromosomal lesions.</text>
</comment>
<comment type="catalytic activity">
    <reaction evidence="1">
        <text>XTP + H2O = XDP + phosphate + H(+)</text>
        <dbReference type="Rhea" id="RHEA:28406"/>
        <dbReference type="ChEBI" id="CHEBI:15377"/>
        <dbReference type="ChEBI" id="CHEBI:15378"/>
        <dbReference type="ChEBI" id="CHEBI:43474"/>
        <dbReference type="ChEBI" id="CHEBI:59884"/>
        <dbReference type="ChEBI" id="CHEBI:61314"/>
        <dbReference type="EC" id="3.6.1.73"/>
    </reaction>
</comment>
<comment type="catalytic activity">
    <reaction evidence="1">
        <text>ITP + H2O = IDP + phosphate + H(+)</text>
        <dbReference type="Rhea" id="RHEA:28330"/>
        <dbReference type="ChEBI" id="CHEBI:15377"/>
        <dbReference type="ChEBI" id="CHEBI:15378"/>
        <dbReference type="ChEBI" id="CHEBI:43474"/>
        <dbReference type="ChEBI" id="CHEBI:58280"/>
        <dbReference type="ChEBI" id="CHEBI:61402"/>
        <dbReference type="EC" id="3.6.1.73"/>
    </reaction>
</comment>
<comment type="cofactor">
    <cofactor evidence="1">
        <name>Mg(2+)</name>
        <dbReference type="ChEBI" id="CHEBI:18420"/>
    </cofactor>
    <cofactor evidence="1">
        <name>Mn(2+)</name>
        <dbReference type="ChEBI" id="CHEBI:29035"/>
    </cofactor>
    <text evidence="1">Binds 1 divalent metal cation per subunit; can use either Mg(2+) or Mn(2+).</text>
</comment>
<comment type="subunit">
    <text evidence="1">Homodimer.</text>
</comment>
<comment type="similarity">
    <text evidence="1">Belongs to the YjjX NTPase family.</text>
</comment>
<dbReference type="EC" id="3.6.1.73" evidence="1"/>
<dbReference type="EMBL" id="CP001120">
    <property type="protein sequence ID" value="ACF69178.1"/>
    <property type="molecule type" value="Genomic_DNA"/>
</dbReference>
<dbReference type="RefSeq" id="WP_000554314.1">
    <property type="nucleotide sequence ID" value="NC_011083.1"/>
</dbReference>
<dbReference type="SMR" id="B4TH17"/>
<dbReference type="KEGG" id="seh:SeHA_C4994"/>
<dbReference type="HOGENOM" id="CLU_087417_1_0_6"/>
<dbReference type="Proteomes" id="UP000001866">
    <property type="component" value="Chromosome"/>
</dbReference>
<dbReference type="GO" id="GO:0103023">
    <property type="term" value="F:ITPase activity"/>
    <property type="evidence" value="ECO:0007669"/>
    <property type="project" value="UniProtKB-EC"/>
</dbReference>
<dbReference type="GO" id="GO:0046872">
    <property type="term" value="F:metal ion binding"/>
    <property type="evidence" value="ECO:0007669"/>
    <property type="project" value="UniProtKB-KW"/>
</dbReference>
<dbReference type="GO" id="GO:0000166">
    <property type="term" value="F:nucleotide binding"/>
    <property type="evidence" value="ECO:0007669"/>
    <property type="project" value="UniProtKB-KW"/>
</dbReference>
<dbReference type="GO" id="GO:0017111">
    <property type="term" value="F:ribonucleoside triphosphate phosphatase activity"/>
    <property type="evidence" value="ECO:0000250"/>
    <property type="project" value="UniProtKB"/>
</dbReference>
<dbReference type="GO" id="GO:0009117">
    <property type="term" value="P:nucleotide metabolic process"/>
    <property type="evidence" value="ECO:0007669"/>
    <property type="project" value="UniProtKB-KW"/>
</dbReference>
<dbReference type="GO" id="GO:0006772">
    <property type="term" value="P:thiamine metabolic process"/>
    <property type="evidence" value="ECO:0007669"/>
    <property type="project" value="TreeGrafter"/>
</dbReference>
<dbReference type="FunFam" id="3.90.950.10:FF:000002">
    <property type="entry name" value="Inosine/xanthosine triphosphatase"/>
    <property type="match status" value="1"/>
</dbReference>
<dbReference type="Gene3D" id="3.90.950.10">
    <property type="match status" value="1"/>
</dbReference>
<dbReference type="HAMAP" id="MF_00648">
    <property type="entry name" value="Non_canon_purine_NTPase_YjjX"/>
    <property type="match status" value="1"/>
</dbReference>
<dbReference type="InterPro" id="IPR029001">
    <property type="entry name" value="ITPase-like_fam"/>
</dbReference>
<dbReference type="InterPro" id="IPR002786">
    <property type="entry name" value="Non_canon_purine_NTPase"/>
</dbReference>
<dbReference type="InterPro" id="IPR026533">
    <property type="entry name" value="NTPase/PRRC1"/>
</dbReference>
<dbReference type="InterPro" id="IPR050299">
    <property type="entry name" value="YjjX_NTPase"/>
</dbReference>
<dbReference type="NCBIfam" id="TIGR00258">
    <property type="entry name" value="inosine/xanthosine triphosphatase"/>
    <property type="match status" value="1"/>
</dbReference>
<dbReference type="NCBIfam" id="NF003459">
    <property type="entry name" value="PRK05074.1"/>
    <property type="match status" value="1"/>
</dbReference>
<dbReference type="PANTHER" id="PTHR34699">
    <property type="match status" value="1"/>
</dbReference>
<dbReference type="PANTHER" id="PTHR34699:SF2">
    <property type="entry name" value="NON-CANONICAL PURINE NTP PHOSPHATASE_PRRC1 DOMAIN-CONTAINING PROTEIN"/>
    <property type="match status" value="1"/>
</dbReference>
<dbReference type="Pfam" id="PF01931">
    <property type="entry name" value="NTPase_I-T"/>
    <property type="match status" value="1"/>
</dbReference>
<dbReference type="SUPFAM" id="SSF52972">
    <property type="entry name" value="ITPase-like"/>
    <property type="match status" value="1"/>
</dbReference>
<reference key="1">
    <citation type="journal article" date="2011" name="J. Bacteriol.">
        <title>Comparative genomics of 28 Salmonella enterica isolates: evidence for CRISPR-mediated adaptive sublineage evolution.</title>
        <authorList>
            <person name="Fricke W.F."/>
            <person name="Mammel M.K."/>
            <person name="McDermott P.F."/>
            <person name="Tartera C."/>
            <person name="White D.G."/>
            <person name="Leclerc J.E."/>
            <person name="Ravel J."/>
            <person name="Cebula T.A."/>
        </authorList>
    </citation>
    <scope>NUCLEOTIDE SEQUENCE [LARGE SCALE GENOMIC DNA]</scope>
    <source>
        <strain>SL476</strain>
    </source>
</reference>
<keyword id="KW-0378">Hydrolase</keyword>
<keyword id="KW-0460">Magnesium</keyword>
<keyword id="KW-0464">Manganese</keyword>
<keyword id="KW-0479">Metal-binding</keyword>
<keyword id="KW-0546">Nucleotide metabolism</keyword>
<keyword id="KW-0547">Nucleotide-binding</keyword>
<accession>B4TH17</accession>
<sequence length="171" mass="18470">MHQVISATTNPAKIQAILQAFEEIFGEGSCHITPVAVESGVPEQPFGSEETRAGARNRVGNARRLHPQADFWVAIEAGIDDDATFSWVVIDNGVQRGEARSATLPLPAVILDRVRQGEALGPVMSHYTGIDEIGRKEGAIGVFTAGKLTRSSVYYQAVILALSPFHNAVYR</sequence>
<protein>
    <recommendedName>
        <fullName evidence="1">Inosine/xanthosine triphosphatase</fullName>
        <shortName evidence="1">ITPase/XTPase</shortName>
        <ecNumber evidence="1">3.6.1.73</ecNumber>
    </recommendedName>
    <alternativeName>
        <fullName evidence="1">Non-canonical purine NTP phosphatase</fullName>
    </alternativeName>
    <alternativeName>
        <fullName evidence="1">Non-standard purine NTP phosphatase</fullName>
    </alternativeName>
    <alternativeName>
        <fullName evidence="1">Nucleoside-triphosphate phosphatase</fullName>
        <shortName evidence="1">NTPase</shortName>
    </alternativeName>
</protein>
<name>NCPP_SALHS</name>
<gene>
    <name type="primary">yjjX</name>
    <name type="ordered locus">SeHA_C4994</name>
</gene>
<evidence type="ECO:0000255" key="1">
    <source>
        <dbReference type="HAMAP-Rule" id="MF_00648"/>
    </source>
</evidence>
<feature type="chain" id="PRO_1000130946" description="Inosine/xanthosine triphosphatase">
    <location>
        <begin position="1"/>
        <end position="171"/>
    </location>
</feature>
<feature type="binding site" evidence="1">
    <location>
        <begin position="8"/>
        <end position="13"/>
    </location>
    <ligand>
        <name>substrate</name>
    </ligand>
</feature>
<feature type="binding site" evidence="1">
    <location>
        <position position="38"/>
    </location>
    <ligand>
        <name>Mg(2+)</name>
        <dbReference type="ChEBI" id="CHEBI:18420"/>
    </ligand>
</feature>
<feature type="binding site" evidence="1">
    <location>
        <position position="68"/>
    </location>
    <ligand>
        <name>Mg(2+)</name>
        <dbReference type="ChEBI" id="CHEBI:18420"/>
    </ligand>
</feature>